<name>FTSZ_ECO57</name>
<dbReference type="EMBL" id="AE005174">
    <property type="protein sequence ID" value="AAG54399.1"/>
    <property type="molecule type" value="Genomic_DNA"/>
</dbReference>
<dbReference type="EMBL" id="BA000007">
    <property type="protein sequence ID" value="BAB33522.1"/>
    <property type="molecule type" value="Genomic_DNA"/>
</dbReference>
<dbReference type="PIR" id="C85492">
    <property type="entry name" value="C85492"/>
</dbReference>
<dbReference type="PIR" id="C90641">
    <property type="entry name" value="C90641"/>
</dbReference>
<dbReference type="RefSeq" id="NP_308126.1">
    <property type="nucleotide sequence ID" value="NC_002695.1"/>
</dbReference>
<dbReference type="RefSeq" id="WP_000462776.1">
    <property type="nucleotide sequence ID" value="NZ_VOAI01000002.1"/>
</dbReference>
<dbReference type="SMR" id="P0A9A8"/>
<dbReference type="STRING" id="155864.Z0105"/>
<dbReference type="GeneID" id="913575"/>
<dbReference type="GeneID" id="93777339"/>
<dbReference type="KEGG" id="ece:Z0105"/>
<dbReference type="KEGG" id="ecs:ECs_0099"/>
<dbReference type="PATRIC" id="fig|386585.9.peg.199"/>
<dbReference type="eggNOG" id="COG0206">
    <property type="taxonomic scope" value="Bacteria"/>
</dbReference>
<dbReference type="HOGENOM" id="CLU_024865_0_1_6"/>
<dbReference type="OMA" id="GNPSIGQ"/>
<dbReference type="Proteomes" id="UP000000558">
    <property type="component" value="Chromosome"/>
</dbReference>
<dbReference type="Proteomes" id="UP000002519">
    <property type="component" value="Chromosome"/>
</dbReference>
<dbReference type="GO" id="GO:0032153">
    <property type="term" value="C:cell division site"/>
    <property type="evidence" value="ECO:0007669"/>
    <property type="project" value="UniProtKB-UniRule"/>
</dbReference>
<dbReference type="GO" id="GO:0005737">
    <property type="term" value="C:cytoplasm"/>
    <property type="evidence" value="ECO:0007669"/>
    <property type="project" value="UniProtKB-SubCell"/>
</dbReference>
<dbReference type="GO" id="GO:0005525">
    <property type="term" value="F:GTP binding"/>
    <property type="evidence" value="ECO:0007669"/>
    <property type="project" value="UniProtKB-UniRule"/>
</dbReference>
<dbReference type="GO" id="GO:0003924">
    <property type="term" value="F:GTPase activity"/>
    <property type="evidence" value="ECO:0007669"/>
    <property type="project" value="UniProtKB-UniRule"/>
</dbReference>
<dbReference type="GO" id="GO:0000917">
    <property type="term" value="P:division septum assembly"/>
    <property type="evidence" value="ECO:0007669"/>
    <property type="project" value="UniProtKB-KW"/>
</dbReference>
<dbReference type="GO" id="GO:0043093">
    <property type="term" value="P:FtsZ-dependent cytokinesis"/>
    <property type="evidence" value="ECO:0007669"/>
    <property type="project" value="UniProtKB-UniRule"/>
</dbReference>
<dbReference type="GO" id="GO:0051258">
    <property type="term" value="P:protein polymerization"/>
    <property type="evidence" value="ECO:0007669"/>
    <property type="project" value="UniProtKB-UniRule"/>
</dbReference>
<dbReference type="CDD" id="cd02201">
    <property type="entry name" value="FtsZ_type1"/>
    <property type="match status" value="1"/>
</dbReference>
<dbReference type="FunFam" id="3.30.1330.20:FF:000004">
    <property type="entry name" value="Cell division protein FtsZ"/>
    <property type="match status" value="1"/>
</dbReference>
<dbReference type="FunFam" id="3.40.50.1440:FF:000023">
    <property type="entry name" value="Cell division protein FtsZ"/>
    <property type="match status" value="1"/>
</dbReference>
<dbReference type="Gene3D" id="3.30.1330.20">
    <property type="entry name" value="Tubulin/FtsZ, C-terminal domain"/>
    <property type="match status" value="1"/>
</dbReference>
<dbReference type="Gene3D" id="3.40.50.1440">
    <property type="entry name" value="Tubulin/FtsZ, GTPase domain"/>
    <property type="match status" value="1"/>
</dbReference>
<dbReference type="HAMAP" id="MF_00909">
    <property type="entry name" value="FtsZ"/>
    <property type="match status" value="1"/>
</dbReference>
<dbReference type="InterPro" id="IPR000158">
    <property type="entry name" value="Cell_div_FtsZ"/>
</dbReference>
<dbReference type="InterPro" id="IPR020805">
    <property type="entry name" value="Cell_div_FtsZ_CS"/>
</dbReference>
<dbReference type="InterPro" id="IPR045061">
    <property type="entry name" value="FtsZ/CetZ"/>
</dbReference>
<dbReference type="InterPro" id="IPR024757">
    <property type="entry name" value="FtsZ_C"/>
</dbReference>
<dbReference type="InterPro" id="IPR008280">
    <property type="entry name" value="Tub_FtsZ_C"/>
</dbReference>
<dbReference type="InterPro" id="IPR037103">
    <property type="entry name" value="Tubulin/FtsZ-like_C"/>
</dbReference>
<dbReference type="InterPro" id="IPR018316">
    <property type="entry name" value="Tubulin/FtsZ_2-layer-sand-dom"/>
</dbReference>
<dbReference type="InterPro" id="IPR036525">
    <property type="entry name" value="Tubulin/FtsZ_GTPase_sf"/>
</dbReference>
<dbReference type="InterPro" id="IPR003008">
    <property type="entry name" value="Tubulin_FtsZ_GTPase"/>
</dbReference>
<dbReference type="NCBIfam" id="TIGR00065">
    <property type="entry name" value="ftsZ"/>
    <property type="match status" value="1"/>
</dbReference>
<dbReference type="PANTHER" id="PTHR30314">
    <property type="entry name" value="CELL DIVISION PROTEIN FTSZ-RELATED"/>
    <property type="match status" value="1"/>
</dbReference>
<dbReference type="PANTHER" id="PTHR30314:SF3">
    <property type="entry name" value="MITOCHONDRIAL DIVISION PROTEIN FSZA"/>
    <property type="match status" value="1"/>
</dbReference>
<dbReference type="Pfam" id="PF12327">
    <property type="entry name" value="FtsZ_C"/>
    <property type="match status" value="1"/>
</dbReference>
<dbReference type="Pfam" id="PF00091">
    <property type="entry name" value="Tubulin"/>
    <property type="match status" value="1"/>
</dbReference>
<dbReference type="PRINTS" id="PR00423">
    <property type="entry name" value="CELLDVISFTSZ"/>
</dbReference>
<dbReference type="SMART" id="SM00864">
    <property type="entry name" value="Tubulin"/>
    <property type="match status" value="1"/>
</dbReference>
<dbReference type="SMART" id="SM00865">
    <property type="entry name" value="Tubulin_C"/>
    <property type="match status" value="1"/>
</dbReference>
<dbReference type="SUPFAM" id="SSF55307">
    <property type="entry name" value="Tubulin C-terminal domain-like"/>
    <property type="match status" value="1"/>
</dbReference>
<dbReference type="SUPFAM" id="SSF52490">
    <property type="entry name" value="Tubulin nucleotide-binding domain-like"/>
    <property type="match status" value="1"/>
</dbReference>
<dbReference type="PROSITE" id="PS01134">
    <property type="entry name" value="FTSZ_1"/>
    <property type="match status" value="1"/>
</dbReference>
<dbReference type="PROSITE" id="PS01135">
    <property type="entry name" value="FTSZ_2"/>
    <property type="match status" value="1"/>
</dbReference>
<comment type="function">
    <text evidence="1">Essential cell division protein that forms a contractile ring structure (Z ring) at the future cell division site. The regulation of the ring assembly controls the timing and the location of cell division. One of the functions of the FtsZ ring is to recruit other cell division proteins to the septum to produce a new cell wall between the dividing cells. Binds GTP and shows GTPase activity.</text>
</comment>
<comment type="subunit">
    <text evidence="1">Homodimer. Polymerizes to form a dynamic ring structure in a strictly GTP-dependent manner. Interacts directly with several other division proteins.</text>
</comment>
<comment type="subcellular location">
    <subcellularLocation>
        <location evidence="1">Cytoplasm</location>
    </subcellularLocation>
    <text evidence="1">Assembles at midcell at the inner surface of the cytoplasmic membrane.</text>
</comment>
<comment type="similarity">
    <text evidence="1">Belongs to the FtsZ family.</text>
</comment>
<gene>
    <name evidence="1" type="primary">ftsZ</name>
    <name type="ordered locus">Z0105</name>
    <name type="ordered locus">ECs0099</name>
</gene>
<evidence type="ECO:0000255" key="1">
    <source>
        <dbReference type="HAMAP-Rule" id="MF_00909"/>
    </source>
</evidence>
<proteinExistence type="inferred from homology"/>
<organism>
    <name type="scientific">Escherichia coli O157:H7</name>
    <dbReference type="NCBI Taxonomy" id="83334"/>
    <lineage>
        <taxon>Bacteria</taxon>
        <taxon>Pseudomonadati</taxon>
        <taxon>Pseudomonadota</taxon>
        <taxon>Gammaproteobacteria</taxon>
        <taxon>Enterobacterales</taxon>
        <taxon>Enterobacteriaceae</taxon>
        <taxon>Escherichia</taxon>
    </lineage>
</organism>
<feature type="chain" id="PRO_0000114350" description="Cell division protein FtsZ">
    <location>
        <begin position="1"/>
        <end position="383"/>
    </location>
</feature>
<feature type="binding site" evidence="1">
    <location>
        <begin position="20"/>
        <end position="24"/>
    </location>
    <ligand>
        <name>GTP</name>
        <dbReference type="ChEBI" id="CHEBI:37565"/>
    </ligand>
</feature>
<feature type="binding site" evidence="1">
    <location>
        <begin position="107"/>
        <end position="109"/>
    </location>
    <ligand>
        <name>GTP</name>
        <dbReference type="ChEBI" id="CHEBI:37565"/>
    </ligand>
</feature>
<feature type="binding site" evidence="1">
    <location>
        <position position="138"/>
    </location>
    <ligand>
        <name>GTP</name>
        <dbReference type="ChEBI" id="CHEBI:37565"/>
    </ligand>
</feature>
<feature type="binding site" evidence="1">
    <location>
        <position position="142"/>
    </location>
    <ligand>
        <name>GTP</name>
        <dbReference type="ChEBI" id="CHEBI:37565"/>
    </ligand>
</feature>
<feature type="binding site" evidence="1">
    <location>
        <position position="186"/>
    </location>
    <ligand>
        <name>GTP</name>
        <dbReference type="ChEBI" id="CHEBI:37565"/>
    </ligand>
</feature>
<sequence>MFEPMELTNDAVIKVIGVGGGGGNAVEHMVRERIEGVEFFAVNTDAQALRKTAVGQTIQIGSGITKGLGAGANPEVGRNAADEDRDALRAALEGADMVFIAAGMGGGTGTGAAPVVAEVAKDLGILTVAVVTKPFNFEGKKRMAFAEQGITELSKHVDSLITIPNDKLLKVLGRGISLLDAFGAANDVLKGAVQGIAELITRPGLMNVDFADVRTVMSEMGYAMMGSGVASGEDRAEEAAEMAISSPLLEDIDLSGARGVLVNITAGFDLRLDEFETVGNTIRAFASDNATVVIGTSLDPDMNDELRVTVVATGIGMDKRPEITLVTNKQVQQPVMDRYQQHGMAPLTQEQKPVAKVVNDNAPQTAKEPDYLDIPAFLRKQAD</sequence>
<accession>P0A9A8</accession>
<accession>P06138</accession>
<accession>P77857</accession>
<accession>P78047</accession>
<keyword id="KW-0131">Cell cycle</keyword>
<keyword id="KW-0132">Cell division</keyword>
<keyword id="KW-0963">Cytoplasm</keyword>
<keyword id="KW-0342">GTP-binding</keyword>
<keyword id="KW-0547">Nucleotide-binding</keyword>
<keyword id="KW-1185">Reference proteome</keyword>
<keyword id="KW-0717">Septation</keyword>
<reference key="1">
    <citation type="journal article" date="2001" name="Nature">
        <title>Genome sequence of enterohaemorrhagic Escherichia coli O157:H7.</title>
        <authorList>
            <person name="Perna N.T."/>
            <person name="Plunkett G. III"/>
            <person name="Burland V."/>
            <person name="Mau B."/>
            <person name="Glasner J.D."/>
            <person name="Rose D.J."/>
            <person name="Mayhew G.F."/>
            <person name="Evans P.S."/>
            <person name="Gregor J."/>
            <person name="Kirkpatrick H.A."/>
            <person name="Posfai G."/>
            <person name="Hackett J."/>
            <person name="Klink S."/>
            <person name="Boutin A."/>
            <person name="Shao Y."/>
            <person name="Miller L."/>
            <person name="Grotbeck E.J."/>
            <person name="Davis N.W."/>
            <person name="Lim A."/>
            <person name="Dimalanta E.T."/>
            <person name="Potamousis K."/>
            <person name="Apodaca J."/>
            <person name="Anantharaman T.S."/>
            <person name="Lin J."/>
            <person name="Yen G."/>
            <person name="Schwartz D.C."/>
            <person name="Welch R.A."/>
            <person name="Blattner F.R."/>
        </authorList>
    </citation>
    <scope>NUCLEOTIDE SEQUENCE [LARGE SCALE GENOMIC DNA]</scope>
    <source>
        <strain>O157:H7 / EDL933 / ATCC 700927 / EHEC</strain>
    </source>
</reference>
<reference key="2">
    <citation type="journal article" date="2001" name="DNA Res.">
        <title>Complete genome sequence of enterohemorrhagic Escherichia coli O157:H7 and genomic comparison with a laboratory strain K-12.</title>
        <authorList>
            <person name="Hayashi T."/>
            <person name="Makino K."/>
            <person name="Ohnishi M."/>
            <person name="Kurokawa K."/>
            <person name="Ishii K."/>
            <person name="Yokoyama K."/>
            <person name="Han C.-G."/>
            <person name="Ohtsubo E."/>
            <person name="Nakayama K."/>
            <person name="Murata T."/>
            <person name="Tanaka M."/>
            <person name="Tobe T."/>
            <person name="Iida T."/>
            <person name="Takami H."/>
            <person name="Honda T."/>
            <person name="Sasakawa C."/>
            <person name="Ogasawara N."/>
            <person name="Yasunaga T."/>
            <person name="Kuhara S."/>
            <person name="Shiba T."/>
            <person name="Hattori M."/>
            <person name="Shinagawa H."/>
        </authorList>
    </citation>
    <scope>NUCLEOTIDE SEQUENCE [LARGE SCALE GENOMIC DNA]</scope>
    <source>
        <strain>O157:H7 / Sakai / RIMD 0509952 / EHEC</strain>
    </source>
</reference>
<protein>
    <recommendedName>
        <fullName evidence="1">Cell division protein FtsZ</fullName>
    </recommendedName>
</protein>